<feature type="chain" id="PRO_0000290059" description="Small ribosomal subunit protein uS12cz/uS12cy">
    <location>
        <begin position="1"/>
        <end position="124"/>
    </location>
</feature>
<geneLocation type="chloroplast"/>
<proteinExistence type="inferred from homology"/>
<dbReference type="EMBL" id="AY522329">
    <property type="status" value="NOT_ANNOTATED_CDS"/>
    <property type="molecule type" value="Genomic_DNA"/>
</dbReference>
<dbReference type="RefSeq" id="YP_009161343.1">
    <property type="nucleotide sequence ID" value="NC_027678.1"/>
</dbReference>
<dbReference type="SMR" id="P0C461"/>
<dbReference type="STRING" id="39946.P0C461"/>
<dbReference type="Proteomes" id="UP000007015">
    <property type="component" value="Chloroplast"/>
</dbReference>
<dbReference type="GO" id="GO:0009507">
    <property type="term" value="C:chloroplast"/>
    <property type="evidence" value="ECO:0007669"/>
    <property type="project" value="UniProtKB-SubCell"/>
</dbReference>
<dbReference type="GO" id="GO:0009536">
    <property type="term" value="C:plastid"/>
    <property type="evidence" value="ECO:0000305"/>
    <property type="project" value="Gramene"/>
</dbReference>
<dbReference type="GO" id="GO:0015935">
    <property type="term" value="C:small ribosomal subunit"/>
    <property type="evidence" value="ECO:0007669"/>
    <property type="project" value="InterPro"/>
</dbReference>
<dbReference type="GO" id="GO:0019843">
    <property type="term" value="F:rRNA binding"/>
    <property type="evidence" value="ECO:0007669"/>
    <property type="project" value="UniProtKB-UniRule"/>
</dbReference>
<dbReference type="GO" id="GO:0003735">
    <property type="term" value="F:structural constituent of ribosome"/>
    <property type="evidence" value="ECO:0007669"/>
    <property type="project" value="InterPro"/>
</dbReference>
<dbReference type="GO" id="GO:0006412">
    <property type="term" value="P:translation"/>
    <property type="evidence" value="ECO:0007669"/>
    <property type="project" value="UniProtKB-UniRule"/>
</dbReference>
<dbReference type="CDD" id="cd03368">
    <property type="entry name" value="Ribosomal_S12"/>
    <property type="match status" value="1"/>
</dbReference>
<dbReference type="FunFam" id="2.40.50.140:FF:000008">
    <property type="entry name" value="30S ribosomal protein S12, chloroplastic"/>
    <property type="match status" value="1"/>
</dbReference>
<dbReference type="Gene3D" id="2.40.50.140">
    <property type="entry name" value="Nucleic acid-binding proteins"/>
    <property type="match status" value="1"/>
</dbReference>
<dbReference type="HAMAP" id="MF_00403_B">
    <property type="entry name" value="Ribosomal_uS12_B"/>
    <property type="match status" value="1"/>
</dbReference>
<dbReference type="InterPro" id="IPR012340">
    <property type="entry name" value="NA-bd_OB-fold"/>
</dbReference>
<dbReference type="InterPro" id="IPR006032">
    <property type="entry name" value="Ribosomal_uS12"/>
</dbReference>
<dbReference type="InterPro" id="IPR005679">
    <property type="entry name" value="Ribosomal_uS12_bac"/>
</dbReference>
<dbReference type="NCBIfam" id="TIGR00981">
    <property type="entry name" value="rpsL_bact"/>
    <property type="match status" value="1"/>
</dbReference>
<dbReference type="PANTHER" id="PTHR11652">
    <property type="entry name" value="30S RIBOSOMAL PROTEIN S12 FAMILY MEMBER"/>
    <property type="match status" value="1"/>
</dbReference>
<dbReference type="Pfam" id="PF00164">
    <property type="entry name" value="Ribosom_S12_S23"/>
    <property type="match status" value="1"/>
</dbReference>
<dbReference type="PIRSF" id="PIRSF002133">
    <property type="entry name" value="Ribosomal_S12/S23"/>
    <property type="match status" value="1"/>
</dbReference>
<dbReference type="PRINTS" id="PR01034">
    <property type="entry name" value="RIBOSOMALS12"/>
</dbReference>
<dbReference type="SUPFAM" id="SSF50249">
    <property type="entry name" value="Nucleic acid-binding proteins"/>
    <property type="match status" value="1"/>
</dbReference>
<dbReference type="PROSITE" id="PS00055">
    <property type="entry name" value="RIBOSOMAL_S12"/>
    <property type="match status" value="1"/>
</dbReference>
<gene>
    <name type="primary">rps12-A</name>
</gene>
<gene>
    <name type="primary">rps12-B</name>
</gene>
<organism>
    <name type="scientific">Oryza sativa subsp. indica</name>
    <name type="common">Rice</name>
    <dbReference type="NCBI Taxonomy" id="39946"/>
    <lineage>
        <taxon>Eukaryota</taxon>
        <taxon>Viridiplantae</taxon>
        <taxon>Streptophyta</taxon>
        <taxon>Embryophyta</taxon>
        <taxon>Tracheophyta</taxon>
        <taxon>Spermatophyta</taxon>
        <taxon>Magnoliopsida</taxon>
        <taxon>Liliopsida</taxon>
        <taxon>Poales</taxon>
        <taxon>Poaceae</taxon>
        <taxon>BOP clade</taxon>
        <taxon>Oryzoideae</taxon>
        <taxon>Oryzeae</taxon>
        <taxon>Oryzinae</taxon>
        <taxon>Oryza</taxon>
        <taxon>Oryza sativa</taxon>
    </lineage>
</organism>
<name>RR12_ORYSI</name>
<comment type="function">
    <text evidence="1">With S4 and S5 plays an important role in translational accuracy. Located at the interface of the 30S and 50S subunits (By similarity).</text>
</comment>
<comment type="subunit">
    <text evidence="1">Part of the 30S ribosomal subunit.</text>
</comment>
<comment type="subcellular location">
    <subcellularLocation>
        <location>Plastid</location>
        <location>Chloroplast</location>
    </subcellularLocation>
</comment>
<comment type="similarity">
    <text evidence="3">Belongs to the universal ribosomal protein uS12 family.</text>
</comment>
<accession>P0C461</accession>
<evidence type="ECO:0000250" key="1"/>
<evidence type="ECO:0000255" key="2">
    <source>
        <dbReference type="HAMAP-Rule" id="MF_00403"/>
    </source>
</evidence>
<evidence type="ECO:0000305" key="3"/>
<sequence length="124" mass="13820">MPTVKQLIRNARQPIRNARKSAALKGCPQRRGTCARVYTINPKKPNSALRKVARVRLTSGFEITAYIPGIGHNLQEHSVVLVRGGRVKDLPGVRYRIIRGALDAVAVKNRQQGRSKYGVKKPKK</sequence>
<protein>
    <recommendedName>
        <fullName evidence="2">Small ribosomal subunit protein uS12cz/uS12cy</fullName>
    </recommendedName>
    <alternativeName>
        <fullName evidence="3">30S ribosomal protein S12, chloroplastic</fullName>
    </alternativeName>
</protein>
<reference key="1">
    <citation type="journal article" date="2004" name="Plant Physiol.">
        <title>A comparison of rice chloroplast genomes.</title>
        <authorList>
            <person name="Tang J."/>
            <person name="Xia H."/>
            <person name="Cao M."/>
            <person name="Zhang X."/>
            <person name="Zeng W."/>
            <person name="Hu S."/>
            <person name="Tong W."/>
            <person name="Wang J."/>
            <person name="Wang J."/>
            <person name="Yu J."/>
            <person name="Yang H."/>
            <person name="Zhu L."/>
        </authorList>
    </citation>
    <scope>NUCLEOTIDE SEQUENCE [LARGE SCALE GENOMIC DNA]</scope>
    <source>
        <strain>cv. 93-11</strain>
    </source>
</reference>
<keyword id="KW-0150">Chloroplast</keyword>
<keyword id="KW-0934">Plastid</keyword>
<keyword id="KW-1185">Reference proteome</keyword>
<keyword id="KW-0687">Ribonucleoprotein</keyword>
<keyword id="KW-0689">Ribosomal protein</keyword>
<keyword id="KW-0694">RNA-binding</keyword>
<keyword id="KW-0699">rRNA-binding</keyword>